<feature type="signal peptide" evidence="1">
    <location>
        <begin position="1"/>
        <end position="31"/>
    </location>
</feature>
<feature type="propeptide" id="PRO_0000027181" evidence="1">
    <location>
        <begin position="32"/>
        <end position="111"/>
    </location>
</feature>
<feature type="chain" id="PRO_0000027182" description="Subtilisin">
    <location>
        <begin position="112"/>
        <end position="420"/>
    </location>
</feature>
<feature type="domain" description="Peptidase S8" evidence="2">
    <location>
        <begin position="118"/>
        <end position="420"/>
    </location>
</feature>
<feature type="active site" description="Charge relay system" evidence="2">
    <location>
        <position position="145"/>
    </location>
</feature>
<feature type="active site" description="Charge relay system" evidence="2">
    <location>
        <position position="182"/>
    </location>
</feature>
<feature type="active site" description="Charge relay system" evidence="2">
    <location>
        <position position="360"/>
    </location>
</feature>
<feature type="binding site" evidence="1">
    <location>
        <position position="115"/>
    </location>
    <ligand>
        <name>Ca(2+)</name>
        <dbReference type="ChEBI" id="CHEBI:29108"/>
    </ligand>
</feature>
<feature type="binding site" evidence="1">
    <location>
        <position position="154"/>
    </location>
    <ligand>
        <name>Ca(2+)</name>
        <dbReference type="ChEBI" id="CHEBI:29108"/>
    </ligand>
</feature>
<evidence type="ECO:0000255" key="1"/>
<evidence type="ECO:0000255" key="2">
    <source>
        <dbReference type="PROSITE-ProRule" id="PRU01240"/>
    </source>
</evidence>
<evidence type="ECO:0000305" key="3"/>
<organism>
    <name type="scientific">Bacillus sp. (strain TA39)</name>
    <dbReference type="NCBI Taxonomy" id="29336"/>
    <lineage>
        <taxon>Bacteria</taxon>
        <taxon>Bacillati</taxon>
        <taxon>Bacillota</taxon>
        <taxon>Bacilli</taxon>
        <taxon>Bacillales</taxon>
        <taxon>Bacillaceae</taxon>
        <taxon>Bacillus</taxon>
    </lineage>
</organism>
<protein>
    <recommendedName>
        <fullName>Subtilisin</fullName>
        <ecNumber>3.4.21.62</ecNumber>
    </recommendedName>
</protein>
<comment type="function">
    <text>Subtilisin is an extracellular alkaline serine protease, it catalyzes the hydrolysis of proteins and peptide amides.</text>
</comment>
<comment type="catalytic activity">
    <reaction>
        <text>Hydrolysis of proteins with broad specificity for peptide bonds, and a preference for a large uncharged residue in P1. Hydrolyzes peptide amides.</text>
        <dbReference type="EC" id="3.4.21.62"/>
    </reaction>
</comment>
<comment type="cofactor">
    <cofactor evidence="3">
        <name>Ca(2+)</name>
        <dbReference type="ChEBI" id="CHEBI:29108"/>
    </cofactor>
    <text evidence="3">Binds 1 Ca(2+) ion per subunit.</text>
</comment>
<comment type="biophysicochemical properties">
    <temperatureDependence>
        <text>Still active at temperatures close to 0 degrees Celsius. Thermolabile.</text>
    </temperatureDependence>
</comment>
<comment type="subcellular location">
    <subcellularLocation>
        <location>Secreted</location>
    </subcellularLocation>
</comment>
<comment type="miscellaneous">
    <text>Secretion of subtilisin is associated with onset of sporulation, and many mutations which block sporulation at early stages affect expression levels of subtilisin. However, subtilisin is not necessary for normal sporulation.</text>
</comment>
<comment type="similarity">
    <text evidence="3">Belongs to the peptidase S8 family.</text>
</comment>
<dbReference type="EC" id="3.4.21.62"/>
<dbReference type="EMBL" id="X62369">
    <property type="protein sequence ID" value="CAA44227.1"/>
    <property type="molecule type" value="Genomic_DNA"/>
</dbReference>
<dbReference type="PIR" id="S23407">
    <property type="entry name" value="S23407"/>
</dbReference>
<dbReference type="SMR" id="P28842"/>
<dbReference type="MEROPS" id="S08.140"/>
<dbReference type="GO" id="GO:0005576">
    <property type="term" value="C:extracellular region"/>
    <property type="evidence" value="ECO:0007669"/>
    <property type="project" value="UniProtKB-SubCell"/>
</dbReference>
<dbReference type="GO" id="GO:0046872">
    <property type="term" value="F:metal ion binding"/>
    <property type="evidence" value="ECO:0007669"/>
    <property type="project" value="UniProtKB-KW"/>
</dbReference>
<dbReference type="GO" id="GO:0004252">
    <property type="term" value="F:serine-type endopeptidase activity"/>
    <property type="evidence" value="ECO:0007669"/>
    <property type="project" value="UniProtKB-EC"/>
</dbReference>
<dbReference type="GO" id="GO:0006508">
    <property type="term" value="P:proteolysis"/>
    <property type="evidence" value="ECO:0007669"/>
    <property type="project" value="UniProtKB-KW"/>
</dbReference>
<dbReference type="GO" id="GO:0030435">
    <property type="term" value="P:sporulation resulting in formation of a cellular spore"/>
    <property type="evidence" value="ECO:0007669"/>
    <property type="project" value="UniProtKB-KW"/>
</dbReference>
<dbReference type="Gene3D" id="3.40.50.200">
    <property type="entry name" value="Peptidase S8/S53 domain"/>
    <property type="match status" value="1"/>
</dbReference>
<dbReference type="InterPro" id="IPR000209">
    <property type="entry name" value="Peptidase_S8/S53_dom"/>
</dbReference>
<dbReference type="InterPro" id="IPR036852">
    <property type="entry name" value="Peptidase_S8/S53_dom_sf"/>
</dbReference>
<dbReference type="InterPro" id="IPR023827">
    <property type="entry name" value="Peptidase_S8_Asp-AS"/>
</dbReference>
<dbReference type="InterPro" id="IPR022398">
    <property type="entry name" value="Peptidase_S8_His-AS"/>
</dbReference>
<dbReference type="InterPro" id="IPR023828">
    <property type="entry name" value="Peptidase_S8_Ser-AS"/>
</dbReference>
<dbReference type="InterPro" id="IPR050131">
    <property type="entry name" value="Peptidase_S8_subtilisin-like"/>
</dbReference>
<dbReference type="InterPro" id="IPR015500">
    <property type="entry name" value="Peptidase_S8_subtilisin-rel"/>
</dbReference>
<dbReference type="PANTHER" id="PTHR43806:SF11">
    <property type="entry name" value="CEREVISIN-RELATED"/>
    <property type="match status" value="1"/>
</dbReference>
<dbReference type="PANTHER" id="PTHR43806">
    <property type="entry name" value="PEPTIDASE S8"/>
    <property type="match status" value="1"/>
</dbReference>
<dbReference type="Pfam" id="PF00082">
    <property type="entry name" value="Peptidase_S8"/>
    <property type="match status" value="1"/>
</dbReference>
<dbReference type="PRINTS" id="PR00723">
    <property type="entry name" value="SUBTILISIN"/>
</dbReference>
<dbReference type="SUPFAM" id="SSF52743">
    <property type="entry name" value="Subtilisin-like"/>
    <property type="match status" value="1"/>
</dbReference>
<dbReference type="PROSITE" id="PS51892">
    <property type="entry name" value="SUBTILASE"/>
    <property type="match status" value="1"/>
</dbReference>
<dbReference type="PROSITE" id="PS00136">
    <property type="entry name" value="SUBTILASE_ASP"/>
    <property type="match status" value="1"/>
</dbReference>
<dbReference type="PROSITE" id="PS00137">
    <property type="entry name" value="SUBTILASE_HIS"/>
    <property type="match status" value="1"/>
</dbReference>
<dbReference type="PROSITE" id="PS00138">
    <property type="entry name" value="SUBTILASE_SER"/>
    <property type="match status" value="1"/>
</dbReference>
<sequence>MKRSGKIFTTAMLAVTLMMPAMGVSANEGNAAAEGNEKFRVLVDSVDQKNLKNAKQQYGVHWDFAGEGFTTDMNEKQFNALKKNKNLTVEKVPELEIATATDKPEALYNAMAASQSTPWGIKAIYNNSSITQTSGGGGINIAVLDTGVNTNHPDLRNNVEQCKDFTVGTTYTNNSCTDRQGHGTHVAGSALADGGTGNGVYGVAPDADLWAYKVLGDDGSGYADDIAAAIRHAGDQATALNTKVVINMSLGSSGESSLITNAVNYSYNKGVLIIAAAGNSGPYQGSIGYPGALVNAVAVAALENKVENGTYRVADFSSRGYSWTDGDYAIQKGDVEISAPGAAIYSTWFDGGYATISGTSMASPHAAGLAAKIWAQYPSASNVDVRGELQYRAYENDILSGYYAGYGDDFASGFGFATVQ</sequence>
<proteinExistence type="evidence at protein level"/>
<reference key="1">
    <citation type="journal article" date="1992" name="Biochim. Biophys. Acta">
        <title>Nucleotide and derived amino acid sequence of the subtilisin from the antarctic psychrotroph Bacillus TA39.</title>
        <authorList>
            <person name="Narinx E."/>
            <person name="Davail S."/>
            <person name="Feller G."/>
            <person name="Gerday C."/>
        </authorList>
    </citation>
    <scope>NUCLEOTIDE SEQUENCE [GENOMIC DNA]</scope>
</reference>
<name>SUBT_BACS9</name>
<keyword id="KW-0106">Calcium</keyword>
<keyword id="KW-0378">Hydrolase</keyword>
<keyword id="KW-0479">Metal-binding</keyword>
<keyword id="KW-0645">Protease</keyword>
<keyword id="KW-0964">Secreted</keyword>
<keyword id="KW-0720">Serine protease</keyword>
<keyword id="KW-0732">Signal</keyword>
<keyword id="KW-0749">Sporulation</keyword>
<keyword id="KW-0865">Zymogen</keyword>
<accession>P28842</accession>
<gene>
    <name type="primary">sub1</name>
</gene>